<name>RBSD_STAAM</name>
<keyword id="KW-0119">Carbohydrate metabolism</keyword>
<keyword id="KW-0963">Cytoplasm</keyword>
<keyword id="KW-0413">Isomerase</keyword>
<feature type="chain" id="PRO_0000346268" description="D-ribose pyranase">
    <location>
        <begin position="1"/>
        <end position="134"/>
    </location>
</feature>
<feature type="active site" description="Proton donor" evidence="1">
    <location>
        <position position="20"/>
    </location>
</feature>
<feature type="binding site" evidence="1">
    <location>
        <position position="28"/>
    </location>
    <ligand>
        <name>substrate</name>
    </ligand>
</feature>
<feature type="binding site" evidence="1">
    <location>
        <position position="99"/>
    </location>
    <ligand>
        <name>substrate</name>
    </ligand>
</feature>
<feature type="binding site" evidence="1">
    <location>
        <begin position="123"/>
        <end position="125"/>
    </location>
    <ligand>
        <name>substrate</name>
    </ligand>
</feature>
<protein>
    <recommendedName>
        <fullName evidence="1">D-ribose pyranase</fullName>
        <ecNumber evidence="1">5.4.99.62</ecNumber>
    </recommendedName>
</protein>
<comment type="function">
    <text evidence="1">Catalyzes the interconversion of beta-pyran and beta-furan forms of D-ribose.</text>
</comment>
<comment type="catalytic activity">
    <reaction evidence="1">
        <text>beta-D-ribopyranose = beta-D-ribofuranose</text>
        <dbReference type="Rhea" id="RHEA:25432"/>
        <dbReference type="ChEBI" id="CHEBI:27476"/>
        <dbReference type="ChEBI" id="CHEBI:47002"/>
        <dbReference type="EC" id="5.4.99.62"/>
    </reaction>
</comment>
<comment type="pathway">
    <text evidence="1">Carbohydrate metabolism; D-ribose degradation; D-ribose 5-phosphate from beta-D-ribopyranose: step 1/2.</text>
</comment>
<comment type="subunit">
    <text evidence="1">Homodecamer.</text>
</comment>
<comment type="subcellular location">
    <subcellularLocation>
        <location evidence="1">Cytoplasm</location>
    </subcellularLocation>
</comment>
<comment type="similarity">
    <text evidence="1">Belongs to the RbsD / FucU family. RbsD subfamily.</text>
</comment>
<dbReference type="EC" id="5.4.99.62" evidence="1"/>
<dbReference type="EMBL" id="BA000017">
    <property type="protein sequence ID" value="BAB56431.1"/>
    <property type="molecule type" value="Genomic_DNA"/>
</dbReference>
<dbReference type="RefSeq" id="WP_000747873.1">
    <property type="nucleotide sequence ID" value="NC_002758.2"/>
</dbReference>
<dbReference type="SMR" id="Q99WV6"/>
<dbReference type="KEGG" id="sav:SAV0269"/>
<dbReference type="HOGENOM" id="CLU_135498_0_0_9"/>
<dbReference type="PhylomeDB" id="Q99WV6"/>
<dbReference type="UniPathway" id="UPA00916">
    <property type="reaction ID" value="UER00888"/>
</dbReference>
<dbReference type="Proteomes" id="UP000002481">
    <property type="component" value="Chromosome"/>
</dbReference>
<dbReference type="GO" id="GO:0005829">
    <property type="term" value="C:cytosol"/>
    <property type="evidence" value="ECO:0007669"/>
    <property type="project" value="TreeGrafter"/>
</dbReference>
<dbReference type="GO" id="GO:0062193">
    <property type="term" value="F:D-ribose pyranase activity"/>
    <property type="evidence" value="ECO:0007669"/>
    <property type="project" value="UniProtKB-EC"/>
</dbReference>
<dbReference type="GO" id="GO:0016872">
    <property type="term" value="F:intramolecular lyase activity"/>
    <property type="evidence" value="ECO:0007669"/>
    <property type="project" value="UniProtKB-UniRule"/>
</dbReference>
<dbReference type="GO" id="GO:0048029">
    <property type="term" value="F:monosaccharide binding"/>
    <property type="evidence" value="ECO:0007669"/>
    <property type="project" value="InterPro"/>
</dbReference>
<dbReference type="GO" id="GO:0019303">
    <property type="term" value="P:D-ribose catabolic process"/>
    <property type="evidence" value="ECO:0007669"/>
    <property type="project" value="UniProtKB-UniRule"/>
</dbReference>
<dbReference type="FunFam" id="3.40.1650.10:FF:000004">
    <property type="entry name" value="D-ribose pyranase"/>
    <property type="match status" value="1"/>
</dbReference>
<dbReference type="Gene3D" id="3.40.1650.10">
    <property type="entry name" value="RbsD-like domain"/>
    <property type="match status" value="1"/>
</dbReference>
<dbReference type="HAMAP" id="MF_01661">
    <property type="entry name" value="D_rib_pyranase"/>
    <property type="match status" value="1"/>
</dbReference>
<dbReference type="InterPro" id="IPR023064">
    <property type="entry name" value="D-ribose_pyranase"/>
</dbReference>
<dbReference type="InterPro" id="IPR023750">
    <property type="entry name" value="RbsD-like_sf"/>
</dbReference>
<dbReference type="InterPro" id="IPR007721">
    <property type="entry name" value="RbsD_FucU"/>
</dbReference>
<dbReference type="NCBIfam" id="NF008761">
    <property type="entry name" value="PRK11797.1"/>
    <property type="match status" value="1"/>
</dbReference>
<dbReference type="PANTHER" id="PTHR37831">
    <property type="entry name" value="D-RIBOSE PYRANASE"/>
    <property type="match status" value="1"/>
</dbReference>
<dbReference type="PANTHER" id="PTHR37831:SF1">
    <property type="entry name" value="D-RIBOSE PYRANASE"/>
    <property type="match status" value="1"/>
</dbReference>
<dbReference type="Pfam" id="PF05025">
    <property type="entry name" value="RbsD_FucU"/>
    <property type="match status" value="1"/>
</dbReference>
<dbReference type="SUPFAM" id="SSF102546">
    <property type="entry name" value="RbsD-like"/>
    <property type="match status" value="1"/>
</dbReference>
<organism>
    <name type="scientific">Staphylococcus aureus (strain Mu50 / ATCC 700699)</name>
    <dbReference type="NCBI Taxonomy" id="158878"/>
    <lineage>
        <taxon>Bacteria</taxon>
        <taxon>Bacillati</taxon>
        <taxon>Bacillota</taxon>
        <taxon>Bacilli</taxon>
        <taxon>Bacillales</taxon>
        <taxon>Staphylococcaceae</taxon>
        <taxon>Staphylococcus</taxon>
    </lineage>
</organism>
<accession>Q99WV6</accession>
<proteinExistence type="inferred from homology"/>
<sequence>MKKSAVLNEHISKAIATIGHFDLLTINDAGMPIPNDHRRIDLAVTKNLPRFIDVLATVLEEMEIQKIYLAEEIKEHNPTQLQQIKQLISSEIEIIFIPHEEMKSNLAHPLNKGNIRTGETTPYSNIALESNVTF</sequence>
<reference key="1">
    <citation type="journal article" date="2001" name="Lancet">
        <title>Whole genome sequencing of meticillin-resistant Staphylococcus aureus.</title>
        <authorList>
            <person name="Kuroda M."/>
            <person name="Ohta T."/>
            <person name="Uchiyama I."/>
            <person name="Baba T."/>
            <person name="Yuzawa H."/>
            <person name="Kobayashi I."/>
            <person name="Cui L."/>
            <person name="Oguchi A."/>
            <person name="Aoki K."/>
            <person name="Nagai Y."/>
            <person name="Lian J.-Q."/>
            <person name="Ito T."/>
            <person name="Kanamori M."/>
            <person name="Matsumaru H."/>
            <person name="Maruyama A."/>
            <person name="Murakami H."/>
            <person name="Hosoyama A."/>
            <person name="Mizutani-Ui Y."/>
            <person name="Takahashi N.K."/>
            <person name="Sawano T."/>
            <person name="Inoue R."/>
            <person name="Kaito C."/>
            <person name="Sekimizu K."/>
            <person name="Hirakawa H."/>
            <person name="Kuhara S."/>
            <person name="Goto S."/>
            <person name="Yabuzaki J."/>
            <person name="Kanehisa M."/>
            <person name="Yamashita A."/>
            <person name="Oshima K."/>
            <person name="Furuya K."/>
            <person name="Yoshino C."/>
            <person name="Shiba T."/>
            <person name="Hattori M."/>
            <person name="Ogasawara N."/>
            <person name="Hayashi H."/>
            <person name="Hiramatsu K."/>
        </authorList>
    </citation>
    <scope>NUCLEOTIDE SEQUENCE [LARGE SCALE GENOMIC DNA]</scope>
    <source>
        <strain>Mu50 / ATCC 700699</strain>
    </source>
</reference>
<evidence type="ECO:0000255" key="1">
    <source>
        <dbReference type="HAMAP-Rule" id="MF_01661"/>
    </source>
</evidence>
<gene>
    <name evidence="1" type="primary">rbsD</name>
    <name type="ordered locus">SAV0269</name>
</gene>